<name>Y1454_STRZJ</name>
<protein>
    <recommendedName>
        <fullName evidence="1">UPF0246 protein SPJ_1454</fullName>
    </recommendedName>
</protein>
<proteinExistence type="inferred from homology"/>
<sequence length="242" mass="27409">MKILIPTAKEMNTDLPSIETTLLRSESQAVLDALALYSASQLESFYKVSAEKAAEECQNIQALKRQTAQHYPALKLFDGLMYRHIKRDKLTEVEQAYLENHVFITSALYGVVPALSPMAPHRLDFLMKLKVAGKTLKSHWKAAYDEAVKQEEVIFSLLSSEFETVFSKEIRAKMVTFKFMEDRGGQLKIHSTISKKARGAFLTALIENQVQTVGEARRLNFAGFVYREDLSQPQGLVFVKEV</sequence>
<dbReference type="EMBL" id="CP000919">
    <property type="protein sequence ID" value="ACO19343.1"/>
    <property type="molecule type" value="Genomic_DNA"/>
</dbReference>
<dbReference type="SMR" id="C1CFD1"/>
<dbReference type="KEGG" id="sjj:SPJ_1454"/>
<dbReference type="HOGENOM" id="CLU_061989_2_1_9"/>
<dbReference type="Proteomes" id="UP000002206">
    <property type="component" value="Chromosome"/>
</dbReference>
<dbReference type="GO" id="GO:0005829">
    <property type="term" value="C:cytosol"/>
    <property type="evidence" value="ECO:0007669"/>
    <property type="project" value="TreeGrafter"/>
</dbReference>
<dbReference type="GO" id="GO:0033194">
    <property type="term" value="P:response to hydroperoxide"/>
    <property type="evidence" value="ECO:0007669"/>
    <property type="project" value="TreeGrafter"/>
</dbReference>
<dbReference type="HAMAP" id="MF_00652">
    <property type="entry name" value="UPF0246"/>
    <property type="match status" value="1"/>
</dbReference>
<dbReference type="InterPro" id="IPR005583">
    <property type="entry name" value="YaaA"/>
</dbReference>
<dbReference type="NCBIfam" id="NF002543">
    <property type="entry name" value="PRK02101.1-4"/>
    <property type="match status" value="1"/>
</dbReference>
<dbReference type="PANTHER" id="PTHR30283:SF4">
    <property type="entry name" value="PEROXIDE STRESS RESISTANCE PROTEIN YAAA"/>
    <property type="match status" value="1"/>
</dbReference>
<dbReference type="PANTHER" id="PTHR30283">
    <property type="entry name" value="PEROXIDE STRESS RESPONSE PROTEIN YAAA"/>
    <property type="match status" value="1"/>
</dbReference>
<dbReference type="Pfam" id="PF03883">
    <property type="entry name" value="H2O2_YaaD"/>
    <property type="match status" value="1"/>
</dbReference>
<gene>
    <name type="ordered locus">SPJ_1454</name>
</gene>
<organism>
    <name type="scientific">Streptococcus pneumoniae (strain JJA)</name>
    <dbReference type="NCBI Taxonomy" id="488222"/>
    <lineage>
        <taxon>Bacteria</taxon>
        <taxon>Bacillati</taxon>
        <taxon>Bacillota</taxon>
        <taxon>Bacilli</taxon>
        <taxon>Lactobacillales</taxon>
        <taxon>Streptococcaceae</taxon>
        <taxon>Streptococcus</taxon>
    </lineage>
</organism>
<comment type="similarity">
    <text evidence="1">Belongs to the UPF0246 family.</text>
</comment>
<feature type="chain" id="PRO_1000200429" description="UPF0246 protein SPJ_1454">
    <location>
        <begin position="1"/>
        <end position="242"/>
    </location>
</feature>
<accession>C1CFD1</accession>
<evidence type="ECO:0000255" key="1">
    <source>
        <dbReference type="HAMAP-Rule" id="MF_00652"/>
    </source>
</evidence>
<reference key="1">
    <citation type="journal article" date="2010" name="Genome Biol.">
        <title>Structure and dynamics of the pan-genome of Streptococcus pneumoniae and closely related species.</title>
        <authorList>
            <person name="Donati C."/>
            <person name="Hiller N.L."/>
            <person name="Tettelin H."/>
            <person name="Muzzi A."/>
            <person name="Croucher N.J."/>
            <person name="Angiuoli S.V."/>
            <person name="Oggioni M."/>
            <person name="Dunning Hotopp J.C."/>
            <person name="Hu F.Z."/>
            <person name="Riley D.R."/>
            <person name="Covacci A."/>
            <person name="Mitchell T.J."/>
            <person name="Bentley S.D."/>
            <person name="Kilian M."/>
            <person name="Ehrlich G.D."/>
            <person name="Rappuoli R."/>
            <person name="Moxon E.R."/>
            <person name="Masignani V."/>
        </authorList>
    </citation>
    <scope>NUCLEOTIDE SEQUENCE [LARGE SCALE GENOMIC DNA]</scope>
    <source>
        <strain>JJA</strain>
    </source>
</reference>